<protein>
    <recommendedName>
        <fullName>ATP synthase protein 8</fullName>
    </recommendedName>
    <alternativeName>
        <fullName>A6L</fullName>
    </alternativeName>
    <alternativeName>
        <fullName>F-ATPase subunit 8</fullName>
    </alternativeName>
</protein>
<accession>Q36838</accession>
<feature type="chain" id="PRO_0000195605" description="ATP synthase protein 8">
    <location>
        <begin position="1"/>
        <end position="48"/>
    </location>
</feature>
<feature type="transmembrane region" description="Helical" evidence="2">
    <location>
        <begin position="13"/>
        <end position="32"/>
    </location>
</feature>
<comment type="function">
    <text evidence="1">Mitochondrial membrane ATP synthase (F(1)F(0) ATP synthase or Complex V) produces ATP from ADP in the presence of a proton gradient across the membrane which is generated by electron transport complexes of the respiratory chain. F-type ATPases consist of two structural domains, F(1) - containing the extramembraneous catalytic core and F(0) - containing the membrane proton channel, linked together by a central stalk and a peripheral stalk. During catalysis, ATP synthesis in the catalytic domain of F(1) is coupled via a rotary mechanism of the central stalk subunits to proton translocation. Part of the complex F(0) domain. Minor subunit located with subunit a in the membrane (By similarity).</text>
</comment>
<comment type="subunit">
    <text evidence="1">F-type ATPases have 2 components, CF(1) - the catalytic core - and CF(0) - the membrane proton channel.</text>
</comment>
<comment type="subcellular location">
    <subcellularLocation>
        <location>Mitochondrion membrane</location>
        <topology>Single-pass membrane protein</topology>
    </subcellularLocation>
</comment>
<comment type="similarity">
    <text evidence="3">Belongs to the ATPase protein 8 family.</text>
</comment>
<organism>
    <name type="scientific">Trichophyton rubrum</name>
    <name type="common">Athlete's foot fungus</name>
    <name type="synonym">Epidermophyton rubrum</name>
    <dbReference type="NCBI Taxonomy" id="5551"/>
    <lineage>
        <taxon>Eukaryota</taxon>
        <taxon>Fungi</taxon>
        <taxon>Dikarya</taxon>
        <taxon>Ascomycota</taxon>
        <taxon>Pezizomycotina</taxon>
        <taxon>Eurotiomycetes</taxon>
        <taxon>Eurotiomycetidae</taxon>
        <taxon>Onygenales</taxon>
        <taxon>Arthrodermataceae</taxon>
        <taxon>Trichophyton</taxon>
    </lineage>
</organism>
<geneLocation type="mitochondrion"/>
<gene>
    <name type="primary">ATP8</name>
</gene>
<dbReference type="EMBL" id="X88896">
    <property type="protein sequence ID" value="CAA61358.1"/>
    <property type="molecule type" value="Genomic_DNA"/>
</dbReference>
<dbReference type="PIR" id="S65035">
    <property type="entry name" value="S65035"/>
</dbReference>
<dbReference type="SMR" id="Q36838"/>
<dbReference type="GO" id="GO:0031966">
    <property type="term" value="C:mitochondrial membrane"/>
    <property type="evidence" value="ECO:0007669"/>
    <property type="project" value="UniProtKB-SubCell"/>
</dbReference>
<dbReference type="GO" id="GO:0045259">
    <property type="term" value="C:proton-transporting ATP synthase complex"/>
    <property type="evidence" value="ECO:0007669"/>
    <property type="project" value="UniProtKB-KW"/>
</dbReference>
<dbReference type="GO" id="GO:0046933">
    <property type="term" value="F:proton-transporting ATP synthase activity, rotational mechanism"/>
    <property type="evidence" value="ECO:0007669"/>
    <property type="project" value="TreeGrafter"/>
</dbReference>
<dbReference type="InterPro" id="IPR009230">
    <property type="entry name" value="ATP_synth_su8_fun"/>
</dbReference>
<dbReference type="PANTHER" id="PTHR36101">
    <property type="entry name" value="ATP SYNTHASE PROTEIN 8"/>
    <property type="match status" value="1"/>
</dbReference>
<dbReference type="PANTHER" id="PTHR36101:SF1">
    <property type="entry name" value="ATP SYNTHASE PROTEIN 8"/>
    <property type="match status" value="1"/>
</dbReference>
<dbReference type="Pfam" id="PF05933">
    <property type="entry name" value="Fun_ATP-synt_8"/>
    <property type="match status" value="1"/>
</dbReference>
<proteinExistence type="inferred from homology"/>
<reference key="1">
    <citation type="journal article" date="1995" name="Curr. Genet.">
        <title>Organisation of the mitochondrial genome of Trichophyton rubrum. DNA sequence analysis of the ND4 gene, the ATPase subunit-6 gene, the ribosomal RNA small-subunit gene, the ND6 gene, the COXIII gene, the ATPase subunit-8 gene and six tRNA genes that correspond respectively to the tyrosine, lysine, glutamine, asparagine, isoleucine and tryptophan isoacceptors.</title>
        <authorList>
            <person name="de Bievre C."/>
            <person name="Dujon B."/>
        </authorList>
    </citation>
    <scope>NUCLEOTIDE SEQUENCE [GENOMIC DNA]</scope>
    <source>
        <strain>IP 1817.89</strain>
    </source>
</reference>
<name>ATP8_TRIRU</name>
<keyword id="KW-0066">ATP synthesis</keyword>
<keyword id="KW-0138">CF(0)</keyword>
<keyword id="KW-0375">Hydrogen ion transport</keyword>
<keyword id="KW-0406">Ion transport</keyword>
<keyword id="KW-0472">Membrane</keyword>
<keyword id="KW-0496">Mitochondrion</keyword>
<keyword id="KW-0812">Transmembrane</keyword>
<keyword id="KW-1133">Transmembrane helix</keyword>
<keyword id="KW-0813">Transport</keyword>
<sequence>MPQLIPFFFFNQVVFTLISLSFIFFVFSKYILPWIVRLYVSRNQYNSL</sequence>
<evidence type="ECO:0000250" key="1"/>
<evidence type="ECO:0000255" key="2"/>
<evidence type="ECO:0000305" key="3"/>